<gene>
    <name type="primary">PROZ</name>
</gene>
<dbReference type="PIR" id="A22171">
    <property type="entry name" value="KXBOZ"/>
</dbReference>
<dbReference type="SMR" id="P00744"/>
<dbReference type="FunCoup" id="P00744">
    <property type="interactions" value="78"/>
</dbReference>
<dbReference type="STRING" id="9913.ENSBTAP00000066682"/>
<dbReference type="MEROPS" id="S01.979"/>
<dbReference type="GlyConnect" id="622">
    <property type="glycosylation" value="1 O-Glc glycan (1 site), 1 O-Linked glycan (1 site)"/>
</dbReference>
<dbReference type="GlyCosmos" id="P00744">
    <property type="glycosylation" value="5 sites, 2 glycans"/>
</dbReference>
<dbReference type="GlyGen" id="P00744">
    <property type="glycosylation" value="5 sites"/>
</dbReference>
<dbReference type="iPTMnet" id="P00744"/>
<dbReference type="PaxDb" id="9913-ENSBTAP00000025894"/>
<dbReference type="eggNOG" id="KOG3627">
    <property type="taxonomic scope" value="Eukaryota"/>
</dbReference>
<dbReference type="HOGENOM" id="CLU_006842_19_5_1"/>
<dbReference type="InParanoid" id="P00744"/>
<dbReference type="Proteomes" id="UP000009136">
    <property type="component" value="Unplaced"/>
</dbReference>
<dbReference type="GO" id="GO:0005615">
    <property type="term" value="C:extracellular space"/>
    <property type="evidence" value="ECO:0000318"/>
    <property type="project" value="GO_Central"/>
</dbReference>
<dbReference type="GO" id="GO:0005509">
    <property type="term" value="F:calcium ion binding"/>
    <property type="evidence" value="ECO:0007669"/>
    <property type="project" value="InterPro"/>
</dbReference>
<dbReference type="GO" id="GO:0004252">
    <property type="term" value="F:serine-type endopeptidase activity"/>
    <property type="evidence" value="ECO:0000318"/>
    <property type="project" value="GO_Central"/>
</dbReference>
<dbReference type="GO" id="GO:0007596">
    <property type="term" value="P:blood coagulation"/>
    <property type="evidence" value="ECO:0000318"/>
    <property type="project" value="GO_Central"/>
</dbReference>
<dbReference type="GO" id="GO:0006508">
    <property type="term" value="P:proteolysis"/>
    <property type="evidence" value="ECO:0007669"/>
    <property type="project" value="InterPro"/>
</dbReference>
<dbReference type="CDD" id="cd00054">
    <property type="entry name" value="EGF_CA"/>
    <property type="match status" value="1"/>
</dbReference>
<dbReference type="FunFam" id="2.10.25.10:FF:000162">
    <property type="entry name" value="Coagulation factor X (Predicted)"/>
    <property type="match status" value="1"/>
</dbReference>
<dbReference type="FunFam" id="2.10.25.10:FF:000480">
    <property type="entry name" value="Protein Z, vitamin K-dependent plasma glycoprotein"/>
    <property type="match status" value="1"/>
</dbReference>
<dbReference type="FunFam" id="2.40.10.10:FF:000114">
    <property type="entry name" value="Protein Z, vitamin K-dependent plasma glycoprotein"/>
    <property type="match status" value="1"/>
</dbReference>
<dbReference type="FunFam" id="4.10.740.10:FF:000001">
    <property type="entry name" value="vitamin K-dependent protein S"/>
    <property type="match status" value="1"/>
</dbReference>
<dbReference type="Gene3D" id="4.10.740.10">
    <property type="entry name" value="Coagulation Factor IX"/>
    <property type="match status" value="1"/>
</dbReference>
<dbReference type="Gene3D" id="2.10.25.10">
    <property type="entry name" value="Laminin"/>
    <property type="match status" value="2"/>
</dbReference>
<dbReference type="Gene3D" id="2.40.10.10">
    <property type="entry name" value="Trypsin-like serine proteases"/>
    <property type="match status" value="2"/>
</dbReference>
<dbReference type="InterPro" id="IPR017857">
    <property type="entry name" value="Coagulation_fac-like_Gla_dom"/>
</dbReference>
<dbReference type="InterPro" id="IPR001881">
    <property type="entry name" value="EGF-like_Ca-bd_dom"/>
</dbReference>
<dbReference type="InterPro" id="IPR000742">
    <property type="entry name" value="EGF-like_dom"/>
</dbReference>
<dbReference type="InterPro" id="IPR000152">
    <property type="entry name" value="EGF-type_Asp/Asn_hydroxyl_site"/>
</dbReference>
<dbReference type="InterPro" id="IPR035972">
    <property type="entry name" value="GLA-like_dom_SF"/>
</dbReference>
<dbReference type="InterPro" id="IPR000294">
    <property type="entry name" value="GLA_domain"/>
</dbReference>
<dbReference type="InterPro" id="IPR012224">
    <property type="entry name" value="Pept_S1A_FX"/>
</dbReference>
<dbReference type="InterPro" id="IPR050442">
    <property type="entry name" value="Peptidase_S1_coag_factors"/>
</dbReference>
<dbReference type="InterPro" id="IPR009003">
    <property type="entry name" value="Peptidase_S1_PA"/>
</dbReference>
<dbReference type="InterPro" id="IPR043504">
    <property type="entry name" value="Peptidase_S1_PA_chymotrypsin"/>
</dbReference>
<dbReference type="InterPro" id="IPR001314">
    <property type="entry name" value="Peptidase_S1A"/>
</dbReference>
<dbReference type="InterPro" id="IPR001254">
    <property type="entry name" value="Trypsin_dom"/>
</dbReference>
<dbReference type="PANTHER" id="PTHR24278">
    <property type="entry name" value="COAGULATION FACTOR"/>
    <property type="match status" value="1"/>
</dbReference>
<dbReference type="PANTHER" id="PTHR24278:SF20">
    <property type="entry name" value="VITAMIN K-DEPENDENT PROTEIN Z"/>
    <property type="match status" value="1"/>
</dbReference>
<dbReference type="Pfam" id="PF00008">
    <property type="entry name" value="EGF"/>
    <property type="match status" value="1"/>
</dbReference>
<dbReference type="Pfam" id="PF14670">
    <property type="entry name" value="FXa_inhibition"/>
    <property type="match status" value="1"/>
</dbReference>
<dbReference type="Pfam" id="PF00594">
    <property type="entry name" value="Gla"/>
    <property type="match status" value="1"/>
</dbReference>
<dbReference type="Pfam" id="PF00089">
    <property type="entry name" value="Trypsin"/>
    <property type="match status" value="1"/>
</dbReference>
<dbReference type="PIRSF" id="PIRSF001143">
    <property type="entry name" value="Factor_X"/>
    <property type="match status" value="1"/>
</dbReference>
<dbReference type="PRINTS" id="PR00722">
    <property type="entry name" value="CHYMOTRYPSIN"/>
</dbReference>
<dbReference type="PRINTS" id="PR00001">
    <property type="entry name" value="GLABLOOD"/>
</dbReference>
<dbReference type="SMART" id="SM00181">
    <property type="entry name" value="EGF"/>
    <property type="match status" value="2"/>
</dbReference>
<dbReference type="SMART" id="SM00179">
    <property type="entry name" value="EGF_CA"/>
    <property type="match status" value="2"/>
</dbReference>
<dbReference type="SMART" id="SM00069">
    <property type="entry name" value="GLA"/>
    <property type="match status" value="1"/>
</dbReference>
<dbReference type="SMART" id="SM00020">
    <property type="entry name" value="Tryp_SPc"/>
    <property type="match status" value="1"/>
</dbReference>
<dbReference type="SUPFAM" id="SSF57196">
    <property type="entry name" value="EGF/Laminin"/>
    <property type="match status" value="1"/>
</dbReference>
<dbReference type="SUPFAM" id="SSF57630">
    <property type="entry name" value="GLA-domain"/>
    <property type="match status" value="1"/>
</dbReference>
<dbReference type="SUPFAM" id="SSF50494">
    <property type="entry name" value="Trypsin-like serine proteases"/>
    <property type="match status" value="1"/>
</dbReference>
<dbReference type="PROSITE" id="PS00010">
    <property type="entry name" value="ASX_HYDROXYL"/>
    <property type="match status" value="1"/>
</dbReference>
<dbReference type="PROSITE" id="PS00022">
    <property type="entry name" value="EGF_1"/>
    <property type="match status" value="1"/>
</dbReference>
<dbReference type="PROSITE" id="PS01186">
    <property type="entry name" value="EGF_2"/>
    <property type="match status" value="1"/>
</dbReference>
<dbReference type="PROSITE" id="PS50026">
    <property type="entry name" value="EGF_3"/>
    <property type="match status" value="1"/>
</dbReference>
<dbReference type="PROSITE" id="PS00011">
    <property type="entry name" value="GLA_1"/>
    <property type="match status" value="1"/>
</dbReference>
<dbReference type="PROSITE" id="PS50998">
    <property type="entry name" value="GLA_2"/>
    <property type="match status" value="1"/>
</dbReference>
<dbReference type="PROSITE" id="PS50240">
    <property type="entry name" value="TRYPSIN_DOM"/>
    <property type="match status" value="1"/>
</dbReference>
<name>PROZ_BOVIN</name>
<organism>
    <name type="scientific">Bos taurus</name>
    <name type="common">Bovine</name>
    <dbReference type="NCBI Taxonomy" id="9913"/>
    <lineage>
        <taxon>Eukaryota</taxon>
        <taxon>Metazoa</taxon>
        <taxon>Chordata</taxon>
        <taxon>Craniata</taxon>
        <taxon>Vertebrata</taxon>
        <taxon>Euteleostomi</taxon>
        <taxon>Mammalia</taxon>
        <taxon>Eutheria</taxon>
        <taxon>Laurasiatheria</taxon>
        <taxon>Artiodactyla</taxon>
        <taxon>Ruminantia</taxon>
        <taxon>Pecora</taxon>
        <taxon>Bovidae</taxon>
        <taxon>Bovinae</taxon>
        <taxon>Bos</taxon>
    </lineage>
</organism>
<comment type="function">
    <text evidence="1">Inhibits activity of the coagulation protease factor Xa in the presence of SERPINA10, calcium and phospholipids (By similarity). Appears to assist hemostasis by binding thrombin and promoting its association with phospholipid vesicles.</text>
</comment>
<comment type="subcellular location">
    <subcellularLocation>
        <location>Secreted</location>
    </subcellularLocation>
</comment>
<comment type="tissue specificity">
    <text>Plasma.</text>
</comment>
<comment type="PTM">
    <text evidence="8">The iron and 2-oxoglutarate dependent 3-hydroxylation of aspartate and asparagine is (R) stereospecific within EGF domains.</text>
</comment>
<comment type="similarity">
    <text evidence="3">Belongs to the peptidase S1 family.</text>
</comment>
<comment type="caution">
    <text evidence="9">Although homologous with the vitamin K-dependent clotting factors, it has lost two of the essential catalytic residues and has no enzymatic activity.</text>
</comment>
<feature type="chain" id="PRO_0000088745" description="Vitamin K-dependent protein Z">
    <location>
        <begin position="1"/>
        <end position="396"/>
    </location>
</feature>
<feature type="domain" description="Gla" evidence="4">
    <location>
        <begin position="1"/>
        <end position="46"/>
    </location>
</feature>
<feature type="domain" description="EGF-like 1" evidence="2">
    <location>
        <begin position="47"/>
        <end position="83"/>
    </location>
</feature>
<feature type="domain" description="EGF-like 2" evidence="2">
    <location>
        <begin position="85"/>
        <end position="126"/>
    </location>
</feature>
<feature type="domain" description="Peptidase S1" evidence="3">
    <location>
        <begin position="135"/>
        <end position="357"/>
    </location>
</feature>
<feature type="region of interest" description="Disordered" evidence="5">
    <location>
        <begin position="356"/>
        <end position="396"/>
    </location>
</feature>
<feature type="compositionally biased region" description="Basic and acidic residues" evidence="5">
    <location>
        <begin position="364"/>
        <end position="375"/>
    </location>
</feature>
<feature type="modified residue" description="4-carboxyglutamate" evidence="4 8">
    <location>
        <position position="7"/>
    </location>
</feature>
<feature type="modified residue" description="4-carboxyglutamate" evidence="4 8">
    <location>
        <position position="8"/>
    </location>
</feature>
<feature type="modified residue" description="4-carboxyglutamate" evidence="4 8">
    <location>
        <position position="11"/>
    </location>
</feature>
<feature type="modified residue" description="4-carboxyglutamate" evidence="4 8">
    <location>
        <position position="15"/>
    </location>
</feature>
<feature type="modified residue" description="4-carboxyglutamate" evidence="4 8">
    <location>
        <position position="17"/>
    </location>
</feature>
<feature type="modified residue" description="4-carboxyglutamate" evidence="4 8">
    <location>
        <position position="20"/>
    </location>
</feature>
<feature type="modified residue" description="4-carboxyglutamate" evidence="4 8">
    <location>
        <position position="21"/>
    </location>
</feature>
<feature type="modified residue" description="4-carboxyglutamate" evidence="4 8">
    <location>
        <position position="26"/>
    </location>
</feature>
<feature type="modified residue" description="4-carboxyglutamate" evidence="4 8">
    <location>
        <position position="27"/>
    </location>
</feature>
<feature type="modified residue" description="4-carboxyglutamate" evidence="4 8">
    <location>
        <position position="30"/>
    </location>
</feature>
<feature type="modified residue" description="4-carboxyglutamate" evidence="4 8">
    <location>
        <position position="33"/>
    </location>
</feature>
<feature type="modified residue" description="4-carboxyglutamate" evidence="4 8">
    <location>
        <position position="36"/>
    </location>
</feature>
<feature type="modified residue" description="4-carboxyglutamate" evidence="4 8">
    <location>
        <position position="40"/>
    </location>
</feature>
<feature type="modified residue" description="(3R)-3-hydroxyaspartate" evidence="8">
    <location>
        <position position="64"/>
    </location>
</feature>
<feature type="glycosylation site" id="CAR_000032" description="O-linked (Glc...) serine" evidence="6 7">
    <location>
        <position position="53"/>
    </location>
</feature>
<feature type="glycosylation site" description="N-linked (GlcNAc...) asparagine" evidence="8">
    <location>
        <position position="59"/>
    </location>
</feature>
<feature type="glycosylation site" description="N-linked (GlcNAc...) asparagine" evidence="8">
    <location>
        <position position="191"/>
    </location>
</feature>
<feature type="glycosylation site" description="N-linked (GlcNAc...) asparagine" evidence="8">
    <location>
        <position position="289"/>
    </location>
</feature>
<feature type="glycosylation site" description="O-linked (GalNAc...) threonine" evidence="8">
    <location>
        <position position="388"/>
    </location>
</feature>
<feature type="disulfide bond" evidence="1">
    <location>
        <begin position="18"/>
        <end position="23"/>
    </location>
</feature>
<feature type="disulfide bond" evidence="1">
    <location>
        <begin position="51"/>
        <end position="62"/>
    </location>
</feature>
<feature type="disulfide bond" evidence="1">
    <location>
        <begin position="56"/>
        <end position="71"/>
    </location>
</feature>
<feature type="disulfide bond" evidence="1">
    <location>
        <begin position="73"/>
        <end position="82"/>
    </location>
</feature>
<feature type="disulfide bond" evidence="1">
    <location>
        <begin position="89"/>
        <end position="101"/>
    </location>
</feature>
<feature type="disulfide bond" evidence="1">
    <location>
        <begin position="97"/>
        <end position="110"/>
    </location>
</feature>
<feature type="disulfide bond" evidence="1">
    <location>
        <begin position="112"/>
        <end position="125"/>
    </location>
</feature>
<feature type="disulfide bond" evidence="1">
    <location>
        <begin position="169"/>
        <end position="185"/>
    </location>
</feature>
<feature type="disulfide bond" evidence="1">
    <location>
        <begin position="284"/>
        <end position="298"/>
    </location>
</feature>
<protein>
    <recommendedName>
        <fullName>Vitamin K-dependent protein Z</fullName>
    </recommendedName>
</protein>
<keyword id="KW-0094">Blood coagulation</keyword>
<keyword id="KW-0106">Calcium</keyword>
<keyword id="KW-0903">Direct protein sequencing</keyword>
<keyword id="KW-1015">Disulfide bond</keyword>
<keyword id="KW-0245">EGF-like domain</keyword>
<keyword id="KW-0301">Gamma-carboxyglutamic acid</keyword>
<keyword id="KW-0325">Glycoprotein</keyword>
<keyword id="KW-0356">Hemostasis</keyword>
<keyword id="KW-0379">Hydroxylation</keyword>
<keyword id="KW-1185">Reference proteome</keyword>
<keyword id="KW-0677">Repeat</keyword>
<keyword id="KW-0964">Secreted</keyword>
<keyword id="KW-0721">Serine protease homolog</keyword>
<proteinExistence type="evidence at protein level"/>
<evidence type="ECO:0000250" key="1"/>
<evidence type="ECO:0000255" key="2">
    <source>
        <dbReference type="PROSITE-ProRule" id="PRU00076"/>
    </source>
</evidence>
<evidence type="ECO:0000255" key="3">
    <source>
        <dbReference type="PROSITE-ProRule" id="PRU00274"/>
    </source>
</evidence>
<evidence type="ECO:0000255" key="4">
    <source>
        <dbReference type="PROSITE-ProRule" id="PRU00463"/>
    </source>
</evidence>
<evidence type="ECO:0000256" key="5">
    <source>
        <dbReference type="SAM" id="MobiDB-lite"/>
    </source>
</evidence>
<evidence type="ECO:0000269" key="6">
    <source>
    </source>
</evidence>
<evidence type="ECO:0000269" key="7">
    <source>
    </source>
</evidence>
<evidence type="ECO:0000269" key="8">
    <source>
    </source>
</evidence>
<evidence type="ECO:0000305" key="9"/>
<accession>P00744</accession>
<sequence>AGSYLLEELFEGHLEKECWEEICVYEEAREVFEDDETTDEFWRTYMGGSPCASQPCLNNGSCQDSIRGYACTCAPGYEGPNCAFAESECHPLRLDGCQHFCYPGPESYTCSCARGHKLGQDRRSCLPHDRCACGTLGPECCQRPQGSQQNLLPFPWQVKLTNSEGKDFCGGVLIQDNFVLTTATCSLLYANISVKTRSHFRLHVRGVHVHTRFEADTGHNDVALLDLARPVRCPDAGRPVCTADADFADSVLLPQPGVLGGWTLRGREMVPLRLRVTHVEPAECGRALNATVTTRTSCERGAAAGAARWVAGGAVVREHRGAWFLTGLLGAAPPEGPGPLLLIKVPRYALWLRQVTQQPSRASPRGDRGQGRDGEPVPGDRGGRWAPTALPPGPLV</sequence>
<reference key="1">
    <citation type="journal article" date="1985" name="FEBS Lett.">
        <title>Amino acid sequence of bovine protein Z: a vitamin K-dependent serine protease homolog.</title>
        <authorList>
            <person name="Hoejrup P."/>
            <person name="Jensen M.S."/>
            <person name="Petersen T.E."/>
        </authorList>
    </citation>
    <scope>PROTEIN SEQUENCE</scope>
    <scope>GLYCOSYLATION AT ASN-59; ASN-191; ASN-289 AND THR-388</scope>
    <scope>HYDROXYLATION AT ASP-64</scope>
    <scope>GAMMA-CARBOXYGLUTAMATION AT GLU-7; GLU-8; GLU-11; GLU-15; GLU-17; GLU-20; GLU-21; GLU-26; GLU-27; GLU-30; GLU-33; GLU-36 AND GLU-40</scope>
</reference>
<reference key="2">
    <citation type="journal article" date="1989" name="J. Biol. Chem.">
        <title>Identification of a disaccharide (Xyl-Glc) and a trisaccharide (Xyl2-Glc) O-glycosidically linked to a serine residue in the first epidermal growth factor-like domain of human factors VII and IX and protein Z and bovine protein Z.</title>
        <authorList>
            <person name="Nishimura H."/>
            <person name="Kawabata S."/>
            <person name="Kisiel W."/>
            <person name="Hase S."/>
            <person name="Ikenaka T."/>
            <person name="Takao T."/>
            <person name="Shimonishi Y."/>
            <person name="Iwanaga S."/>
        </authorList>
    </citation>
    <scope>GLYCOSYLATION AT SER-53</scope>
    <scope>STRUCTURE OF CARBOHYDRATE ON SER-53</scope>
</reference>
<reference key="3">
    <citation type="journal article" date="1990" name="Adv. Exp. Med. Biol.">
        <title>A new trisaccharide sugar chain linked to a serine residue in the first EGF-like domain of clotting factors VII and IX and protein Z.</title>
        <authorList>
            <person name="Iwanaga S."/>
            <person name="Nishimura H."/>
            <person name="Kawabata S."/>
            <person name="Kisiel W."/>
            <person name="Hase S."/>
            <person name="Ikenaka T."/>
        </authorList>
    </citation>
    <scope>GLYCOSYLATION AT SER-53</scope>
    <scope>STRUCTURE OF CARBOHYDRATE ON SER-53</scope>
</reference>